<feature type="transit peptide" description="Mitochondrion" evidence="2">
    <location>
        <begin position="1"/>
        <end position="26"/>
    </location>
</feature>
<feature type="chain" id="PRO_0000406693" description="Exonuclease V, mitochondrial">
    <location>
        <begin position="27"/>
        <end position="585"/>
    </location>
</feature>
<feature type="binding site" evidence="1">
    <location>
        <position position="141"/>
    </location>
    <ligand>
        <name>[4Fe-4S] cluster</name>
        <dbReference type="ChEBI" id="CHEBI:49883"/>
    </ligand>
</feature>
<feature type="binding site" evidence="1">
    <location>
        <position position="549"/>
    </location>
    <ligand>
        <name>[4Fe-4S] cluster</name>
        <dbReference type="ChEBI" id="CHEBI:49883"/>
    </ligand>
</feature>
<feature type="binding site" evidence="1">
    <location>
        <position position="552"/>
    </location>
    <ligand>
        <name>[4Fe-4S] cluster</name>
        <dbReference type="ChEBI" id="CHEBI:49883"/>
    </ligand>
</feature>
<feature type="binding site" evidence="1">
    <location>
        <position position="558"/>
    </location>
    <ligand>
        <name>[4Fe-4S] cluster</name>
        <dbReference type="ChEBI" id="CHEBI:49883"/>
    </ligand>
</feature>
<evidence type="ECO:0000250" key="1"/>
<evidence type="ECO:0000255" key="2"/>
<evidence type="ECO:0000305" key="3"/>
<accession>B5VEB9</accession>
<sequence>MLGRTLINKHGFLIHPRRFVHLNDKSLDGTFILPSKKNHMYDVPTNDPSGILNASDIDRINNLPFFDNTSPTKETNTKEGALLSEKLASVKELFGEDPENPSFINYRFPRGLENPYFDIQVNQLKKKRLSVTQLCTTQNWCELRNFYDFYSQNLSNQLLNLKFQVQKGKKIHKSLEDETHPELNQYKSFTHNFLALTKLSMDIDNDMDALLDNWFNSINRLVSLFTKGDGHAREIVCHGFINLEDGKLVEHLLNSDSKTKENVIISGVIDHLTLRNKHNHQVQKGAAHLDTEYQSWGNILTNLLSNLKELKSNNEIVISDIKTRSVPKIPSIESVIESSKLQTMYYKFFFSHLSQDMTQTYHSFLINAKRRGLDVDAPINPTKILTFILTNPLFANDVKNLLYGLPINHSAFDNDAKGSNTFDMAAFNDLLDRGPTSFNVPIEQDEDSSESTKCVSLRDYGHFYTKWKTPLTLKYFAARLSQIYFIVGNLVSNDLMIEYYYHNDNFHNIIFPYDTLKLGTHAHDSAMVWFGGRDMHPIEPTQKNFNTYCKFCDYRHVCSWKNKNELKLIDLGKELKKIILESSMK</sequence>
<keyword id="KW-0004">4Fe-4S</keyword>
<keyword id="KW-0238">DNA-binding</keyword>
<keyword id="KW-0269">Exonuclease</keyword>
<keyword id="KW-0378">Hydrolase</keyword>
<keyword id="KW-0408">Iron</keyword>
<keyword id="KW-0411">Iron-sulfur</keyword>
<keyword id="KW-0460">Magnesium</keyword>
<keyword id="KW-0479">Metal-binding</keyword>
<keyword id="KW-0496">Mitochondrion</keyword>
<keyword id="KW-0540">Nuclease</keyword>
<keyword id="KW-0809">Transit peptide</keyword>
<organism>
    <name type="scientific">Saccharomyces cerevisiae (strain AWRI1631)</name>
    <name type="common">Baker's yeast</name>
    <dbReference type="NCBI Taxonomy" id="545124"/>
    <lineage>
        <taxon>Eukaryota</taxon>
        <taxon>Fungi</taxon>
        <taxon>Dikarya</taxon>
        <taxon>Ascomycota</taxon>
        <taxon>Saccharomycotina</taxon>
        <taxon>Saccharomycetes</taxon>
        <taxon>Saccharomycetales</taxon>
        <taxon>Saccharomycetaceae</taxon>
        <taxon>Saccharomyces</taxon>
    </lineage>
</organism>
<name>EXO5_YEAS6</name>
<protein>
    <recommendedName>
        <fullName>Exonuclease V, mitochondrial</fullName>
        <shortName>Exo V</shortName>
        <ecNumber>3.1.-.-</ecNumber>
    </recommendedName>
    <alternativeName>
        <fullName>Defects in morphology protein 1</fullName>
    </alternativeName>
</protein>
<comment type="function">
    <text evidence="1">Single strand DNA specific 5' exonuclease involved in mitochondrial DNA replication and recombination. Releases dinucleotides as main products of catalysis. Has the capacity to slide across 5'double-stranded DNA or 5'RNA sequences and resumes cutting two nucleotides downstream of the double-stranded-to-single-stranded junction or RNA-to-DNA junction, respectively (By similarity).</text>
</comment>
<comment type="cofactor">
    <cofactor evidence="1">
        <name>Mg(2+)</name>
        <dbReference type="ChEBI" id="CHEBI:18420"/>
    </cofactor>
</comment>
<comment type="cofactor">
    <cofactor evidence="1">
        <name>[4Fe-4S] cluster</name>
        <dbReference type="ChEBI" id="CHEBI:49883"/>
    </cofactor>
    <text evidence="1">Binds 1 [4Fe-4S] cluster.</text>
</comment>
<comment type="subunit">
    <text evidence="1">Monomer.</text>
</comment>
<comment type="subcellular location">
    <subcellularLocation>
        <location evidence="1">Mitochondrion</location>
    </subcellularLocation>
</comment>
<comment type="similarity">
    <text evidence="3">Belongs to the EXO5 family.</text>
</comment>
<reference key="1">
    <citation type="journal article" date="2008" name="FEMS Yeast Res.">
        <title>Comparative genome analysis of a Saccharomyces cerevisiae wine strain.</title>
        <authorList>
            <person name="Borneman A.R."/>
            <person name="Forgan A.H."/>
            <person name="Pretorius I.S."/>
            <person name="Chambers P.J."/>
        </authorList>
    </citation>
    <scope>NUCLEOTIDE SEQUENCE [LARGE SCALE GENOMIC DNA]</scope>
    <source>
        <strain>AWRI1631</strain>
    </source>
</reference>
<gene>
    <name type="primary">EXO5</name>
    <name type="synonym">DEM1</name>
    <name type="ORF">AWRI1631_22460</name>
</gene>
<proteinExistence type="inferred from homology"/>
<dbReference type="EC" id="3.1.-.-"/>
<dbReference type="EMBL" id="ABSV01000143">
    <property type="protein sequence ID" value="EDZ73724.1"/>
    <property type="molecule type" value="Genomic_DNA"/>
</dbReference>
<dbReference type="Proteomes" id="UP000008988">
    <property type="component" value="Unassembled WGS sequence"/>
</dbReference>
<dbReference type="GO" id="GO:0005739">
    <property type="term" value="C:mitochondrion"/>
    <property type="evidence" value="ECO:0007669"/>
    <property type="project" value="UniProtKB-SubCell"/>
</dbReference>
<dbReference type="GO" id="GO:0005634">
    <property type="term" value="C:nucleus"/>
    <property type="evidence" value="ECO:0007669"/>
    <property type="project" value="TreeGrafter"/>
</dbReference>
<dbReference type="GO" id="GO:0051539">
    <property type="term" value="F:4 iron, 4 sulfur cluster binding"/>
    <property type="evidence" value="ECO:0007669"/>
    <property type="project" value="UniProtKB-KW"/>
</dbReference>
<dbReference type="GO" id="GO:0003677">
    <property type="term" value="F:DNA binding"/>
    <property type="evidence" value="ECO:0007669"/>
    <property type="project" value="UniProtKB-KW"/>
</dbReference>
<dbReference type="GO" id="GO:0046872">
    <property type="term" value="F:metal ion binding"/>
    <property type="evidence" value="ECO:0007669"/>
    <property type="project" value="UniProtKB-KW"/>
</dbReference>
<dbReference type="GO" id="GO:0045145">
    <property type="term" value="F:single-stranded DNA 5'-3' DNA exonuclease activity"/>
    <property type="evidence" value="ECO:0007669"/>
    <property type="project" value="InterPro"/>
</dbReference>
<dbReference type="GO" id="GO:0036297">
    <property type="term" value="P:interstrand cross-link repair"/>
    <property type="evidence" value="ECO:0007669"/>
    <property type="project" value="TreeGrafter"/>
</dbReference>
<dbReference type="GO" id="GO:0000002">
    <property type="term" value="P:mitochondrial genome maintenance"/>
    <property type="evidence" value="ECO:0007669"/>
    <property type="project" value="InterPro"/>
</dbReference>
<dbReference type="InterPro" id="IPR016610">
    <property type="entry name" value="Exo5"/>
</dbReference>
<dbReference type="InterPro" id="IPR019190">
    <property type="entry name" value="EXOV"/>
</dbReference>
<dbReference type="PANTHER" id="PTHR14464">
    <property type="entry name" value="EXONUCLEASE V"/>
    <property type="match status" value="1"/>
</dbReference>
<dbReference type="PANTHER" id="PTHR14464:SF4">
    <property type="entry name" value="EXONUCLEASE V"/>
    <property type="match status" value="1"/>
</dbReference>
<dbReference type="Pfam" id="PF09810">
    <property type="entry name" value="Exo5"/>
    <property type="match status" value="1"/>
</dbReference>
<dbReference type="PIRSF" id="PIRSF013220">
    <property type="entry name" value="UCP013220"/>
    <property type="match status" value="1"/>
</dbReference>